<proteinExistence type="inferred from homology"/>
<organism>
    <name type="scientific">Escherichia coli O157:H7 (strain EC4115 / EHEC)</name>
    <dbReference type="NCBI Taxonomy" id="444450"/>
    <lineage>
        <taxon>Bacteria</taxon>
        <taxon>Pseudomonadati</taxon>
        <taxon>Pseudomonadota</taxon>
        <taxon>Gammaproteobacteria</taxon>
        <taxon>Enterobacterales</taxon>
        <taxon>Enterobacteriaceae</taxon>
        <taxon>Escherichia</taxon>
    </lineage>
</organism>
<feature type="chain" id="PRO_1000201349" description="Carboxy-S-adenosyl-L-methionine synthase">
    <location>
        <begin position="1"/>
        <end position="247"/>
    </location>
</feature>
<feature type="binding site" evidence="1">
    <location>
        <position position="39"/>
    </location>
    <ligand>
        <name>S-adenosyl-L-methionine</name>
        <dbReference type="ChEBI" id="CHEBI:59789"/>
    </ligand>
</feature>
<feature type="binding site" evidence="1">
    <location>
        <begin position="64"/>
        <end position="66"/>
    </location>
    <ligand>
        <name>S-adenosyl-L-methionine</name>
        <dbReference type="ChEBI" id="CHEBI:59789"/>
    </ligand>
</feature>
<feature type="binding site" evidence="1">
    <location>
        <begin position="89"/>
        <end position="90"/>
    </location>
    <ligand>
        <name>S-adenosyl-L-methionine</name>
        <dbReference type="ChEBI" id="CHEBI:59789"/>
    </ligand>
</feature>
<feature type="binding site" evidence="1">
    <location>
        <begin position="117"/>
        <end position="118"/>
    </location>
    <ligand>
        <name>S-adenosyl-L-methionine</name>
        <dbReference type="ChEBI" id="CHEBI:59789"/>
    </ligand>
</feature>
<feature type="binding site" evidence="1">
    <location>
        <position position="132"/>
    </location>
    <ligand>
        <name>S-adenosyl-L-methionine</name>
        <dbReference type="ChEBI" id="CHEBI:59789"/>
    </ligand>
</feature>
<feature type="binding site" evidence="1">
    <location>
        <position position="199"/>
    </location>
    <ligand>
        <name>S-adenosyl-L-methionine</name>
        <dbReference type="ChEBI" id="CHEBI:59789"/>
    </ligand>
</feature>
<dbReference type="EC" id="2.1.3.-" evidence="1"/>
<dbReference type="EMBL" id="CP001164">
    <property type="protein sequence ID" value="ACI38021.1"/>
    <property type="molecule type" value="Genomic_DNA"/>
</dbReference>
<dbReference type="RefSeq" id="WP_000019588.1">
    <property type="nucleotide sequence ID" value="NC_011353.1"/>
</dbReference>
<dbReference type="SMR" id="B5YR15"/>
<dbReference type="GeneID" id="75202724"/>
<dbReference type="KEGG" id="ecf:ECH74115_2606"/>
<dbReference type="HOGENOM" id="CLU_078475_0_0_6"/>
<dbReference type="GO" id="GO:0016743">
    <property type="term" value="F:carboxyl- or carbamoyltransferase activity"/>
    <property type="evidence" value="ECO:0007669"/>
    <property type="project" value="UniProtKB-UniRule"/>
</dbReference>
<dbReference type="GO" id="GO:1904047">
    <property type="term" value="F:S-adenosyl-L-methionine binding"/>
    <property type="evidence" value="ECO:0007669"/>
    <property type="project" value="UniProtKB-UniRule"/>
</dbReference>
<dbReference type="GO" id="GO:0002098">
    <property type="term" value="P:tRNA wobble uridine modification"/>
    <property type="evidence" value="ECO:0007669"/>
    <property type="project" value="InterPro"/>
</dbReference>
<dbReference type="CDD" id="cd02440">
    <property type="entry name" value="AdoMet_MTases"/>
    <property type="match status" value="1"/>
</dbReference>
<dbReference type="FunFam" id="3.40.50.150:FF:000030">
    <property type="entry name" value="Carboxy-S-adenosyl-L-methionine synthase"/>
    <property type="match status" value="1"/>
</dbReference>
<dbReference type="Gene3D" id="3.40.50.150">
    <property type="entry name" value="Vaccinia Virus protein VP39"/>
    <property type="match status" value="1"/>
</dbReference>
<dbReference type="HAMAP" id="MF_01589">
    <property type="entry name" value="Cx_SAM_synthase"/>
    <property type="match status" value="1"/>
</dbReference>
<dbReference type="InterPro" id="IPR005271">
    <property type="entry name" value="CmoA"/>
</dbReference>
<dbReference type="InterPro" id="IPR041698">
    <property type="entry name" value="Methyltransf_25"/>
</dbReference>
<dbReference type="InterPro" id="IPR029063">
    <property type="entry name" value="SAM-dependent_MTases_sf"/>
</dbReference>
<dbReference type="NCBIfam" id="TIGR00740">
    <property type="entry name" value="carboxy-S-adenosyl-L-methionine synthase CmoA"/>
    <property type="match status" value="1"/>
</dbReference>
<dbReference type="NCBIfam" id="NF011995">
    <property type="entry name" value="PRK15451.1"/>
    <property type="match status" value="1"/>
</dbReference>
<dbReference type="PANTHER" id="PTHR43861:SF2">
    <property type="entry name" value="CARBOXY-S-ADENOSYL-L-METHIONINE SYNTHASE"/>
    <property type="match status" value="1"/>
</dbReference>
<dbReference type="PANTHER" id="PTHR43861">
    <property type="entry name" value="TRANS-ACONITATE 2-METHYLTRANSFERASE-RELATED"/>
    <property type="match status" value="1"/>
</dbReference>
<dbReference type="Pfam" id="PF13649">
    <property type="entry name" value="Methyltransf_25"/>
    <property type="match status" value="1"/>
</dbReference>
<dbReference type="PIRSF" id="PIRSF006325">
    <property type="entry name" value="MeTrfase_bac"/>
    <property type="match status" value="1"/>
</dbReference>
<dbReference type="SUPFAM" id="SSF53335">
    <property type="entry name" value="S-adenosyl-L-methionine-dependent methyltransferases"/>
    <property type="match status" value="1"/>
</dbReference>
<gene>
    <name evidence="1" type="primary">cmoA</name>
    <name type="ordered locus">ECH74115_2606</name>
</gene>
<name>CMOA_ECO5E</name>
<keyword id="KW-0949">S-adenosyl-L-methionine</keyword>
<keyword id="KW-0808">Transferase</keyword>
<reference key="1">
    <citation type="journal article" date="2011" name="Proc. Natl. Acad. Sci. U.S.A.">
        <title>Genomic anatomy of Escherichia coli O157:H7 outbreaks.</title>
        <authorList>
            <person name="Eppinger M."/>
            <person name="Mammel M.K."/>
            <person name="Leclerc J.E."/>
            <person name="Ravel J."/>
            <person name="Cebula T.A."/>
        </authorList>
    </citation>
    <scope>NUCLEOTIDE SEQUENCE [LARGE SCALE GENOMIC DNA]</scope>
    <source>
        <strain>EC4115 / EHEC</strain>
    </source>
</reference>
<evidence type="ECO:0000255" key="1">
    <source>
        <dbReference type="HAMAP-Rule" id="MF_01589"/>
    </source>
</evidence>
<accession>B5YR15</accession>
<comment type="function">
    <text evidence="1">Catalyzes the conversion of S-adenosyl-L-methionine (SAM) to carboxy-S-adenosyl-L-methionine (Cx-SAM).</text>
</comment>
<comment type="catalytic activity">
    <reaction evidence="1">
        <text>prephenate + S-adenosyl-L-methionine = carboxy-S-adenosyl-L-methionine + 3-phenylpyruvate + H2O</text>
        <dbReference type="Rhea" id="RHEA:51692"/>
        <dbReference type="ChEBI" id="CHEBI:15377"/>
        <dbReference type="ChEBI" id="CHEBI:18005"/>
        <dbReference type="ChEBI" id="CHEBI:29934"/>
        <dbReference type="ChEBI" id="CHEBI:59789"/>
        <dbReference type="ChEBI" id="CHEBI:134278"/>
    </reaction>
</comment>
<comment type="subunit">
    <text evidence="1">Homodimer.</text>
</comment>
<comment type="similarity">
    <text evidence="1">Belongs to the class I-like SAM-binding methyltransferase superfamily. Cx-SAM synthase family.</text>
</comment>
<protein>
    <recommendedName>
        <fullName evidence="1">Carboxy-S-adenosyl-L-methionine synthase</fullName>
        <shortName evidence="1">Cx-SAM synthase</shortName>
        <ecNumber evidence="1">2.1.3.-</ecNumber>
    </recommendedName>
</protein>
<sequence>MSHRDTLFSAPIARLGDWTFDERVAEVFPDMIQRSVPGYSNIISMIGMLAERFVQPGTQVYDLGCSLGAATLSVRRNIHHDNCKIIAIDNSPAMIERCRRHIDAYKAPTPVDVIEGDIRDIAIENASMVVLNFTLQFLEPSERQALLDKIYQGLNPGGALVLSEKFSFEDAKVGELLFNMHHDFKRANGYSELEISQKRSMLENVMLTDSVETHKARLHKAGFEHSELWFQCFNFGSLVALKAEDAA</sequence>